<protein>
    <recommendedName>
        <fullName>Uncharacterized protein PM0768</fullName>
    </recommendedName>
</protein>
<keyword id="KW-1185">Reference proteome</keyword>
<keyword id="KW-0732">Signal</keyword>
<name>Y768_PASMU</name>
<accession>Q9CMP7</accession>
<organism>
    <name type="scientific">Pasteurella multocida (strain Pm70)</name>
    <dbReference type="NCBI Taxonomy" id="272843"/>
    <lineage>
        <taxon>Bacteria</taxon>
        <taxon>Pseudomonadati</taxon>
        <taxon>Pseudomonadota</taxon>
        <taxon>Gammaproteobacteria</taxon>
        <taxon>Pasteurellales</taxon>
        <taxon>Pasteurellaceae</taxon>
        <taxon>Pasteurella</taxon>
    </lineage>
</organism>
<reference key="1">
    <citation type="journal article" date="2001" name="Proc. Natl. Acad. Sci. U.S.A.">
        <title>Complete genomic sequence of Pasteurella multocida Pm70.</title>
        <authorList>
            <person name="May B.J."/>
            <person name="Zhang Q."/>
            <person name="Li L.L."/>
            <person name="Paustian M.L."/>
            <person name="Whittam T.S."/>
            <person name="Kapur V."/>
        </authorList>
    </citation>
    <scope>NUCLEOTIDE SEQUENCE [LARGE SCALE GENOMIC DNA]</scope>
    <source>
        <strain>Pm70</strain>
    </source>
</reference>
<sequence>MDELILPILILLFLVFVAYFFTKKSKKEENELQMMKKNQEVRKIVENARIRNDLPCLSGFKFGLSLRHIEDMGVSYTHLSRNFGTDLYVIEGRFAPIKNDLIESYFVDINSELGLTRITGNFFSTNNLDFIMEYYKRLLLEKYHEGIVNINDEMNLVLTLDEVIIQLSNIESNISLIYSLIKSDTPEQLAEMLKVQEKDKLGI</sequence>
<dbReference type="EMBL" id="AE004439">
    <property type="protein sequence ID" value="AAK02852.1"/>
    <property type="molecule type" value="Genomic_DNA"/>
</dbReference>
<dbReference type="RefSeq" id="WP_010906841.1">
    <property type="nucleotide sequence ID" value="NC_002663.1"/>
</dbReference>
<dbReference type="SMR" id="Q9CMP7"/>
<dbReference type="EnsemblBacteria" id="AAK02852">
    <property type="protein sequence ID" value="AAK02852"/>
    <property type="gene ID" value="PM0768"/>
</dbReference>
<dbReference type="KEGG" id="pmu:PM0768"/>
<dbReference type="PATRIC" id="fig|272843.6.peg.777"/>
<dbReference type="HOGENOM" id="CLU_1446365_0_0_6"/>
<dbReference type="Proteomes" id="UP000000809">
    <property type="component" value="Chromosome"/>
</dbReference>
<gene>
    <name type="ordered locus">PM0768</name>
</gene>
<evidence type="ECO:0000255" key="1"/>
<feature type="signal peptide" evidence="1">
    <location>
        <begin position="1"/>
        <end position="20" status="uncertain"/>
    </location>
</feature>
<feature type="chain" id="PRO_0000014179" description="Uncharacterized protein PM0768">
    <location>
        <begin position="21" status="uncertain"/>
        <end position="203"/>
    </location>
</feature>
<proteinExistence type="inferred from homology"/>